<comment type="function">
    <text evidence="1">Required for maturation of urease via the functional incorporation of the urease nickel metallocenter.</text>
</comment>
<comment type="subunit">
    <text evidence="1">UreD, UreF and UreG form a complex that acts as a GTP-hydrolysis-dependent molecular chaperone, activating the urease apoprotein by helping to assemble the nickel containing metallocenter of UreC. The UreE protein probably delivers the nickel.</text>
</comment>
<comment type="subcellular location">
    <subcellularLocation>
        <location evidence="1">Cytoplasm</location>
    </subcellularLocation>
</comment>
<comment type="similarity">
    <text evidence="1">Belongs to the UreF family.</text>
</comment>
<feature type="chain" id="PRO_1000145144" description="Urease accessory protein UreF">
    <location>
        <begin position="1"/>
        <end position="221"/>
    </location>
</feature>
<reference key="1">
    <citation type="submission" date="2008-08" db="EMBL/GenBank/DDBJ databases">
        <title>Complete sequence of Vibrio fischeri strain MJ11.</title>
        <authorList>
            <person name="Mandel M.J."/>
            <person name="Stabb E.V."/>
            <person name="Ruby E.G."/>
            <person name="Ferriera S."/>
            <person name="Johnson J."/>
            <person name="Kravitz S."/>
            <person name="Beeson K."/>
            <person name="Sutton G."/>
            <person name="Rogers Y.-H."/>
            <person name="Friedman R."/>
            <person name="Frazier M."/>
            <person name="Venter J.C."/>
        </authorList>
    </citation>
    <scope>NUCLEOTIDE SEQUENCE [LARGE SCALE GENOMIC DNA]</scope>
    <source>
        <strain>MJ11</strain>
    </source>
</reference>
<evidence type="ECO:0000255" key="1">
    <source>
        <dbReference type="HAMAP-Rule" id="MF_01385"/>
    </source>
</evidence>
<organism>
    <name type="scientific">Aliivibrio fischeri (strain MJ11)</name>
    <name type="common">Vibrio fischeri</name>
    <dbReference type="NCBI Taxonomy" id="388396"/>
    <lineage>
        <taxon>Bacteria</taxon>
        <taxon>Pseudomonadati</taxon>
        <taxon>Pseudomonadota</taxon>
        <taxon>Gammaproteobacteria</taxon>
        <taxon>Vibrionales</taxon>
        <taxon>Vibrionaceae</taxon>
        <taxon>Aliivibrio</taxon>
    </lineage>
</organism>
<keyword id="KW-0143">Chaperone</keyword>
<keyword id="KW-0963">Cytoplasm</keyword>
<keyword id="KW-0996">Nickel insertion</keyword>
<sequence>MLEDLRLYQLISPSLPVGSFTYSQGLEWAIEKGWVTNVTELKHWLSNQLMDSLATLELPVLAKLTQLLQQEEWQQAQEWCDFIIANRETKELRLEERQRGLAFSMLLPKLGIELNQTTLPMVKQTQVAAFALAANHWNLTPTKLAAAYAWGWLENAVIVGIKLVPLGQSAGQQLLLEMADVIPQAVEKSQHWPEHLIGSFTPAQVLASSRHESQYTRLFRS</sequence>
<gene>
    <name evidence="1" type="primary">ureF</name>
    <name type="ordered locus">VFMJ11_0689</name>
</gene>
<dbReference type="EMBL" id="CP001139">
    <property type="protein sequence ID" value="ACH66937.1"/>
    <property type="molecule type" value="Genomic_DNA"/>
</dbReference>
<dbReference type="RefSeq" id="WP_012534081.1">
    <property type="nucleotide sequence ID" value="NC_011184.1"/>
</dbReference>
<dbReference type="SMR" id="B5FBC4"/>
<dbReference type="KEGG" id="vfm:VFMJ11_0689"/>
<dbReference type="HOGENOM" id="CLU_049215_2_1_6"/>
<dbReference type="Proteomes" id="UP000001857">
    <property type="component" value="Chromosome I"/>
</dbReference>
<dbReference type="GO" id="GO:0005737">
    <property type="term" value="C:cytoplasm"/>
    <property type="evidence" value="ECO:0007669"/>
    <property type="project" value="UniProtKB-SubCell"/>
</dbReference>
<dbReference type="GO" id="GO:0016151">
    <property type="term" value="F:nickel cation binding"/>
    <property type="evidence" value="ECO:0007669"/>
    <property type="project" value="UniProtKB-UniRule"/>
</dbReference>
<dbReference type="Gene3D" id="1.10.4190.10">
    <property type="entry name" value="Urease accessory protein UreF"/>
    <property type="match status" value="1"/>
</dbReference>
<dbReference type="HAMAP" id="MF_01385">
    <property type="entry name" value="UreF"/>
    <property type="match status" value="1"/>
</dbReference>
<dbReference type="InterPro" id="IPR002639">
    <property type="entry name" value="UreF"/>
</dbReference>
<dbReference type="InterPro" id="IPR038277">
    <property type="entry name" value="UreF_sf"/>
</dbReference>
<dbReference type="PANTHER" id="PTHR33620">
    <property type="entry name" value="UREASE ACCESSORY PROTEIN F"/>
    <property type="match status" value="1"/>
</dbReference>
<dbReference type="PANTHER" id="PTHR33620:SF1">
    <property type="entry name" value="UREASE ACCESSORY PROTEIN F"/>
    <property type="match status" value="1"/>
</dbReference>
<dbReference type="Pfam" id="PF01730">
    <property type="entry name" value="UreF"/>
    <property type="match status" value="1"/>
</dbReference>
<dbReference type="PIRSF" id="PIRSF009467">
    <property type="entry name" value="Ureas_acces_UreF"/>
    <property type="match status" value="1"/>
</dbReference>
<proteinExistence type="inferred from homology"/>
<accession>B5FBC4</accession>
<protein>
    <recommendedName>
        <fullName evidence="1">Urease accessory protein UreF</fullName>
    </recommendedName>
</protein>
<name>UREF_ALIFM</name>